<proteinExistence type="evidence at transcript level"/>
<name>TAZHJ_ASPTN</name>
<protein>
    <recommendedName>
        <fullName evidence="4">Dual trans-enoyl reductase/FAD-dependent monooxygenase tazHJ</fullName>
        <ecNumber evidence="6">1.-.-.-</ecNumber>
    </recommendedName>
    <alternativeName>
        <fullName evidence="4">Azaphilone biosynthesis cluster protein HJ</fullName>
    </alternativeName>
</protein>
<dbReference type="EC" id="1.-.-.-" evidence="6"/>
<dbReference type="EMBL" id="CH476597">
    <property type="protein sequence ID" value="EAU36717.1"/>
    <property type="molecule type" value="Genomic_DNA"/>
</dbReference>
<dbReference type="RefSeq" id="XP_001212621.1">
    <property type="nucleotide sequence ID" value="XM_001212621.1"/>
</dbReference>
<dbReference type="SMR" id="Q0CS91"/>
<dbReference type="STRING" id="341663.Q0CS91"/>
<dbReference type="EnsemblFungi" id="EAU36717">
    <property type="protein sequence ID" value="EAU36717"/>
    <property type="gene ID" value="ATEG_03443"/>
</dbReference>
<dbReference type="GeneID" id="4317487"/>
<dbReference type="VEuPathDB" id="FungiDB:ATEG_03443"/>
<dbReference type="eggNOG" id="KOG1198">
    <property type="taxonomic scope" value="Eukaryota"/>
</dbReference>
<dbReference type="eggNOG" id="KOG2614">
    <property type="taxonomic scope" value="Eukaryota"/>
</dbReference>
<dbReference type="HOGENOM" id="CLU_394806_0_0_1"/>
<dbReference type="OMA" id="ELSHVIC"/>
<dbReference type="OrthoDB" id="417877at2759"/>
<dbReference type="Proteomes" id="UP000007963">
    <property type="component" value="Unassembled WGS sequence"/>
</dbReference>
<dbReference type="GO" id="GO:0071949">
    <property type="term" value="F:FAD binding"/>
    <property type="evidence" value="ECO:0007669"/>
    <property type="project" value="InterPro"/>
</dbReference>
<dbReference type="GO" id="GO:0016651">
    <property type="term" value="F:oxidoreductase activity, acting on NAD(P)H"/>
    <property type="evidence" value="ECO:0007669"/>
    <property type="project" value="InterPro"/>
</dbReference>
<dbReference type="GO" id="GO:0044550">
    <property type="term" value="P:secondary metabolite biosynthetic process"/>
    <property type="evidence" value="ECO:0007669"/>
    <property type="project" value="TreeGrafter"/>
</dbReference>
<dbReference type="CDD" id="cd08249">
    <property type="entry name" value="enoyl_reductase_like"/>
    <property type="match status" value="1"/>
</dbReference>
<dbReference type="FunFam" id="3.50.50.60:FF:000153">
    <property type="entry name" value="Salicylate hydroxylase, putative"/>
    <property type="match status" value="1"/>
</dbReference>
<dbReference type="Gene3D" id="3.50.50.60">
    <property type="entry name" value="FAD/NAD(P)-binding domain"/>
    <property type="match status" value="1"/>
</dbReference>
<dbReference type="Gene3D" id="3.90.180.10">
    <property type="entry name" value="Medium-chain alcohol dehydrogenases, catalytic domain"/>
    <property type="match status" value="1"/>
</dbReference>
<dbReference type="Gene3D" id="3.40.50.720">
    <property type="entry name" value="NAD(P)-binding Rossmann-like Domain"/>
    <property type="match status" value="1"/>
</dbReference>
<dbReference type="InterPro" id="IPR013149">
    <property type="entry name" value="ADH-like_C"/>
</dbReference>
<dbReference type="InterPro" id="IPR002938">
    <property type="entry name" value="FAD-bd"/>
</dbReference>
<dbReference type="InterPro" id="IPR036188">
    <property type="entry name" value="FAD/NAD-bd_sf"/>
</dbReference>
<dbReference type="InterPro" id="IPR051104">
    <property type="entry name" value="FAD_monoxygenase"/>
</dbReference>
<dbReference type="InterPro" id="IPR036291">
    <property type="entry name" value="NAD(P)-bd_dom_sf"/>
</dbReference>
<dbReference type="InterPro" id="IPR047122">
    <property type="entry name" value="Trans-enoyl_RdTase-like"/>
</dbReference>
<dbReference type="PANTHER" id="PTHR46720:SF3">
    <property type="entry name" value="FAD-BINDING DOMAIN-CONTAINING PROTEIN-RELATED"/>
    <property type="match status" value="1"/>
</dbReference>
<dbReference type="PANTHER" id="PTHR46720">
    <property type="entry name" value="HYDROXYLASE, PUTATIVE (AFU_ORTHOLOGUE AFUA_3G01460)-RELATED"/>
    <property type="match status" value="1"/>
</dbReference>
<dbReference type="Pfam" id="PF00107">
    <property type="entry name" value="ADH_zinc_N"/>
    <property type="match status" value="1"/>
</dbReference>
<dbReference type="Pfam" id="PF01494">
    <property type="entry name" value="FAD_binding_3"/>
    <property type="match status" value="1"/>
</dbReference>
<dbReference type="PRINTS" id="PR00420">
    <property type="entry name" value="RNGMNOXGNASE"/>
</dbReference>
<dbReference type="SUPFAM" id="SSF54373">
    <property type="entry name" value="FAD-linked reductases, C-terminal domain"/>
    <property type="match status" value="1"/>
</dbReference>
<dbReference type="SUPFAM" id="SSF51905">
    <property type="entry name" value="FAD/NAD(P)-binding domain"/>
    <property type="match status" value="1"/>
</dbReference>
<dbReference type="SUPFAM" id="SSF51735">
    <property type="entry name" value="NAD(P)-binding Rossmann-fold domains"/>
    <property type="match status" value="1"/>
</dbReference>
<organism>
    <name type="scientific">Aspergillus terreus (strain NIH 2624 / FGSC A1156)</name>
    <dbReference type="NCBI Taxonomy" id="341663"/>
    <lineage>
        <taxon>Eukaryota</taxon>
        <taxon>Fungi</taxon>
        <taxon>Dikarya</taxon>
        <taxon>Ascomycota</taxon>
        <taxon>Pezizomycotina</taxon>
        <taxon>Eurotiomycetes</taxon>
        <taxon>Eurotiomycetidae</taxon>
        <taxon>Eurotiales</taxon>
        <taxon>Aspergillaceae</taxon>
        <taxon>Aspergillus</taxon>
        <taxon>Aspergillus subgen. Circumdati</taxon>
    </lineage>
</organism>
<sequence length="698" mass="76638">MLIIQIPDGMPDEDACTLGVGITTVGQGLYQSLGLPLPGSRARANFPILIYGGSTATGSLAIQYARLSGCSQIITTCSPRHFDWAKSLGADASFDYRDPDCVQKIKDCTQNTLAHVLDCVSTSASAELCAAAIGSNGGTVSYLLPLKHQREDVEAKYTLAYTAFGEYFSIAGTRKFEARPEDLEFAKMFWKLSEGLVAEGKIRVHPPRVGKDGLKGVLDGFQAMREGQNWIPNMYGYEVGDECRSLHVWADRRSLEIPRAPIDQNATSNLDVAIVGGGIAGVTLALGLLKRGIKPIIYERGRSFREIGAGIGFTPNAEWAMKVLDPEIHAAFKRVTVQNGTDWFIWMDGSLEKEAVVHKMYLGERGFEGCARADFLDELVKSLPQGTVRFSKNLVDIVDEDGASEVRLKFSDGSTASAHIVIGCDGIRSKVRQFVIGGDDQPAHHPHYTHKYAFRGLVPMDKAYAALGQEKTDTRHMYLGPDAHALTFPVAGGKLLNVVAFVTDPSSWPDGEKFTLPASKTDAVKAFERFNSTVRAIIDMLPEELSRWAVFDTYDYPAPTFVRGRVCISGDAAHAAAPYHGAGAGFAVEDAAVLAELLSDAYDYLKISDVEKADIPKSVVLRKALETYNSIRLERAHWLVETSRHIGEIYEGQNADIGLDHTKCAAEIDWRCRKIWDYDVDDMMKQTSTLFKKQLGMI</sequence>
<accession>Q0CS91</accession>
<comment type="function">
    <text evidence="3 6">Dual trans-enoyl reductase/FAD-dependent monooxygenase; part of the gene cluster that mediates the biosynthesis of azaterrilone A and other azaphilones, a class of fungal metabolites characterized by a highly oxygenated pyrano-quinone bicyclic core and exhibiting a broad range of bioactivities (PubMed:35398258). The first step of the pathway begins with the non-reducing polyketide synthase tazA that assembles one acetyl-CoA starter unit, five malonyl-CoA units, and catalyzes a series of Claisen condensations, methylation, PT-mediated cyclization, and finally releases the first hexaketide precursor through the R-domain. The tazA product then undergoes reduction on its terminal ketone and the following pyran-ring formation by yet undetermined enzyme(s). Dehydration and enoyl reduction, possibly involving the trans-enoyl reductase tazE leads to the next intermediate. TazD is predicted as an acetyltransferase and might catalyze the acetylation steps leading to the synthesis of azaterrilone A. Azaterrilone A is not the final product of the taz pathway and both the highly reducing polyketide synthase tazB and the dual enzyme tazHJ catalyze late steps of the pathway, leading to the production of the 2 final stereoisomers that contain additional polyketide modification whose structures have still to be determined (Probable).</text>
</comment>
<comment type="pathway">
    <text evidence="3">Secondary metabolite biosynthesis.</text>
</comment>
<comment type="induction">
    <text evidence="3">Expression is positively regulated by the azaterrilone A cluster-specific transcription factor tazR.</text>
</comment>
<comment type="disruption phenotype">
    <text evidence="3">Does not affect the accumulation of azaterrilone A.</text>
</comment>
<comment type="similarity">
    <text evidence="5">In the N-terminal section; belongs to the zinc-containing alcohol dehydrogenase family.</text>
</comment>
<comment type="similarity">
    <text evidence="5">In the C-terminal section; belongs to the paxM FAD-dependent monooxygenase family.</text>
</comment>
<gene>
    <name evidence="4" type="primary">tazHJ</name>
    <name type="ORF">ATEG_03443</name>
</gene>
<feature type="chain" id="PRO_0000456074" description="Dual trans-enoyl reductase/FAD-dependent monooxygenase tazHJ">
    <location>
        <begin position="1"/>
        <end position="698"/>
    </location>
</feature>
<feature type="active site" evidence="1">
    <location>
        <position position="455"/>
    </location>
</feature>
<feature type="binding site" evidence="2">
    <location>
        <begin position="54"/>
        <end position="57"/>
    </location>
    <ligand>
        <name>NADP(+)</name>
        <dbReference type="ChEBI" id="CHEBI:58349"/>
    </ligand>
</feature>
<feature type="binding site" evidence="2">
    <location>
        <begin position="78"/>
        <end position="81"/>
    </location>
    <ligand>
        <name>NADP(+)</name>
        <dbReference type="ChEBI" id="CHEBI:58349"/>
    </ligand>
</feature>
<feature type="binding site" evidence="2">
    <location>
        <position position="96"/>
    </location>
    <ligand>
        <name>NADP(+)</name>
        <dbReference type="ChEBI" id="CHEBI:58349"/>
    </ligand>
</feature>
<feature type="binding site" evidence="2">
    <location>
        <begin position="279"/>
        <end position="280"/>
    </location>
    <ligand>
        <name>NADP(+)</name>
        <dbReference type="ChEBI" id="CHEBI:58349"/>
    </ligand>
</feature>
<feature type="binding site" evidence="1">
    <location>
        <position position="299"/>
    </location>
    <ligand>
        <name>FAD</name>
        <dbReference type="ChEBI" id="CHEBI:57692"/>
    </ligand>
</feature>
<feature type="binding site" evidence="1">
    <location>
        <position position="312"/>
    </location>
    <ligand>
        <name>FAD</name>
        <dbReference type="ChEBI" id="CHEBI:57692"/>
    </ligand>
</feature>
<feature type="binding site" evidence="1">
    <location>
        <position position="372"/>
    </location>
    <ligand>
        <name>FAD</name>
        <dbReference type="ChEBI" id="CHEBI:57692"/>
    </ligand>
</feature>
<feature type="binding site" evidence="1">
    <location>
        <position position="571"/>
    </location>
    <ligand>
        <name>FAD</name>
        <dbReference type="ChEBI" id="CHEBI:57692"/>
    </ligand>
</feature>
<feature type="binding site" evidence="1">
    <location>
        <position position="584"/>
    </location>
    <ligand>
        <name>FAD</name>
        <dbReference type="ChEBI" id="CHEBI:57692"/>
    </ligand>
</feature>
<keyword id="KW-0274">FAD</keyword>
<keyword id="KW-0285">Flavoprotein</keyword>
<keyword id="KW-0521">NADP</keyword>
<keyword id="KW-0547">Nucleotide-binding</keyword>
<keyword id="KW-0560">Oxidoreductase</keyword>
<keyword id="KW-1185">Reference proteome</keyword>
<evidence type="ECO:0000250" key="1">
    <source>
        <dbReference type="UniProtKB" id="B8M9J8"/>
    </source>
</evidence>
<evidence type="ECO:0000250" key="2">
    <source>
        <dbReference type="UniProtKB" id="Q9Y7D0"/>
    </source>
</evidence>
<evidence type="ECO:0000269" key="3">
    <source>
    </source>
</evidence>
<evidence type="ECO:0000303" key="4">
    <source>
    </source>
</evidence>
<evidence type="ECO:0000305" key="5"/>
<evidence type="ECO:0000305" key="6">
    <source>
    </source>
</evidence>
<reference key="1">
    <citation type="submission" date="2005-09" db="EMBL/GenBank/DDBJ databases">
        <title>Annotation of the Aspergillus terreus NIH2624 genome.</title>
        <authorList>
            <person name="Birren B.W."/>
            <person name="Lander E.S."/>
            <person name="Galagan J.E."/>
            <person name="Nusbaum C."/>
            <person name="Devon K."/>
            <person name="Henn M."/>
            <person name="Ma L.-J."/>
            <person name="Jaffe D.B."/>
            <person name="Butler J."/>
            <person name="Alvarez P."/>
            <person name="Gnerre S."/>
            <person name="Grabherr M."/>
            <person name="Kleber M."/>
            <person name="Mauceli E.W."/>
            <person name="Brockman W."/>
            <person name="Rounsley S."/>
            <person name="Young S.K."/>
            <person name="LaButti K."/>
            <person name="Pushparaj V."/>
            <person name="DeCaprio D."/>
            <person name="Crawford M."/>
            <person name="Koehrsen M."/>
            <person name="Engels R."/>
            <person name="Montgomery P."/>
            <person name="Pearson M."/>
            <person name="Howarth C."/>
            <person name="Larson L."/>
            <person name="Luoma S."/>
            <person name="White J."/>
            <person name="Alvarado L."/>
            <person name="Kodira C.D."/>
            <person name="Zeng Q."/>
            <person name="Oleary S."/>
            <person name="Yandava C."/>
            <person name="Denning D.W."/>
            <person name="Nierman W.C."/>
            <person name="Milne T."/>
            <person name="Madden K."/>
        </authorList>
    </citation>
    <scope>NUCLEOTIDE SEQUENCE [LARGE SCALE GENOMIC DNA]</scope>
    <source>
        <strain>NIH 2624 / FGSC A1156</strain>
    </source>
</reference>
<reference key="2">
    <citation type="journal article" date="2022" name="Fungal Genet. Biol.">
        <title>Characterization of a silent azaphilone biosynthesis gene cluster in Aspergillus terreus NIH 2624.</title>
        <authorList>
            <person name="Sun W.W."/>
            <person name="Li C.Y."/>
            <person name="Chiang Y.M."/>
            <person name="Lin T.S."/>
            <person name="Warren S."/>
            <person name="Chang F.R."/>
            <person name="Wang C.C.C."/>
        </authorList>
    </citation>
    <scope>FUNCTION</scope>
    <scope>INDUCTION</scope>
    <scope>DISRUPTION PHENOTYPE</scope>
    <scope>PATHWAY</scope>
</reference>